<protein>
    <recommendedName>
        <fullName evidence="4">Small ribosomal subunit protein uS14</fullName>
    </recommendedName>
    <alternativeName>
        <fullName>40S ribosomal protein S29</fullName>
    </alternativeName>
</protein>
<sequence length="56" mass="6658">MAHENVWFSHPRKYGKGSRQCAHTGRRLGLIRKYGLNISRQSFREYANDIGFVKYR</sequence>
<reference key="1">
    <citation type="journal article" date="2002" name="Nature">
        <title>The genome sequence of Schizosaccharomyces pombe.</title>
        <authorList>
            <person name="Wood V."/>
            <person name="Gwilliam R."/>
            <person name="Rajandream M.A."/>
            <person name="Lyne M.H."/>
            <person name="Lyne R."/>
            <person name="Stewart A."/>
            <person name="Sgouros J.G."/>
            <person name="Peat N."/>
            <person name="Hayles J."/>
            <person name="Baker S.G."/>
            <person name="Basham D."/>
            <person name="Bowman S."/>
            <person name="Brooks K."/>
            <person name="Brown D."/>
            <person name="Brown S."/>
            <person name="Chillingworth T."/>
            <person name="Churcher C.M."/>
            <person name="Collins M."/>
            <person name="Connor R."/>
            <person name="Cronin A."/>
            <person name="Davis P."/>
            <person name="Feltwell T."/>
            <person name="Fraser A."/>
            <person name="Gentles S."/>
            <person name="Goble A."/>
            <person name="Hamlin N."/>
            <person name="Harris D.E."/>
            <person name="Hidalgo J."/>
            <person name="Hodgson G."/>
            <person name="Holroyd S."/>
            <person name="Hornsby T."/>
            <person name="Howarth S."/>
            <person name="Huckle E.J."/>
            <person name="Hunt S."/>
            <person name="Jagels K."/>
            <person name="James K.D."/>
            <person name="Jones L."/>
            <person name="Jones M."/>
            <person name="Leather S."/>
            <person name="McDonald S."/>
            <person name="McLean J."/>
            <person name="Mooney P."/>
            <person name="Moule S."/>
            <person name="Mungall K.L."/>
            <person name="Murphy L.D."/>
            <person name="Niblett D."/>
            <person name="Odell C."/>
            <person name="Oliver K."/>
            <person name="O'Neil S."/>
            <person name="Pearson D."/>
            <person name="Quail M.A."/>
            <person name="Rabbinowitsch E."/>
            <person name="Rutherford K.M."/>
            <person name="Rutter S."/>
            <person name="Saunders D."/>
            <person name="Seeger K."/>
            <person name="Sharp S."/>
            <person name="Skelton J."/>
            <person name="Simmonds M.N."/>
            <person name="Squares R."/>
            <person name="Squares S."/>
            <person name="Stevens K."/>
            <person name="Taylor K."/>
            <person name="Taylor R.G."/>
            <person name="Tivey A."/>
            <person name="Walsh S.V."/>
            <person name="Warren T."/>
            <person name="Whitehead S."/>
            <person name="Woodward J.R."/>
            <person name="Volckaert G."/>
            <person name="Aert R."/>
            <person name="Robben J."/>
            <person name="Grymonprez B."/>
            <person name="Weltjens I."/>
            <person name="Vanstreels E."/>
            <person name="Rieger M."/>
            <person name="Schaefer M."/>
            <person name="Mueller-Auer S."/>
            <person name="Gabel C."/>
            <person name="Fuchs M."/>
            <person name="Duesterhoeft A."/>
            <person name="Fritzc C."/>
            <person name="Holzer E."/>
            <person name="Moestl D."/>
            <person name="Hilbert H."/>
            <person name="Borzym K."/>
            <person name="Langer I."/>
            <person name="Beck A."/>
            <person name="Lehrach H."/>
            <person name="Reinhardt R."/>
            <person name="Pohl T.M."/>
            <person name="Eger P."/>
            <person name="Zimmermann W."/>
            <person name="Wedler H."/>
            <person name="Wambutt R."/>
            <person name="Purnelle B."/>
            <person name="Goffeau A."/>
            <person name="Cadieu E."/>
            <person name="Dreano S."/>
            <person name="Gloux S."/>
            <person name="Lelaure V."/>
            <person name="Mottier S."/>
            <person name="Galibert F."/>
            <person name="Aves S.J."/>
            <person name="Xiang Z."/>
            <person name="Hunt C."/>
            <person name="Moore K."/>
            <person name="Hurst S.M."/>
            <person name="Lucas M."/>
            <person name="Rochet M."/>
            <person name="Gaillardin C."/>
            <person name="Tallada V.A."/>
            <person name="Garzon A."/>
            <person name="Thode G."/>
            <person name="Daga R.R."/>
            <person name="Cruzado L."/>
            <person name="Jimenez J."/>
            <person name="Sanchez M."/>
            <person name="del Rey F."/>
            <person name="Benito J."/>
            <person name="Dominguez A."/>
            <person name="Revuelta J.L."/>
            <person name="Moreno S."/>
            <person name="Armstrong J."/>
            <person name="Forsburg S.L."/>
            <person name="Cerutti L."/>
            <person name="Lowe T."/>
            <person name="McCombie W.R."/>
            <person name="Paulsen I."/>
            <person name="Potashkin J."/>
            <person name="Shpakovski G.V."/>
            <person name="Ussery D."/>
            <person name="Barrell B.G."/>
            <person name="Nurse P."/>
        </authorList>
    </citation>
    <scope>NUCLEOTIDE SEQUENCE [LARGE SCALE GENOMIC DNA]</scope>
    <source>
        <strain>972 / ATCC 24843</strain>
    </source>
</reference>
<reference key="2">
    <citation type="journal article" date="2006" name="Nat. Biotechnol.">
        <title>ORFeome cloning and global analysis of protein localization in the fission yeast Schizosaccharomyces pombe.</title>
        <authorList>
            <person name="Matsuyama A."/>
            <person name="Arai R."/>
            <person name="Yashiroda Y."/>
            <person name="Shirai A."/>
            <person name="Kamata A."/>
            <person name="Sekido S."/>
            <person name="Kobayashi Y."/>
            <person name="Hashimoto A."/>
            <person name="Hamamoto M."/>
            <person name="Hiraoka Y."/>
            <person name="Horinouchi S."/>
            <person name="Yoshida M."/>
        </authorList>
    </citation>
    <scope>SUBCELLULAR LOCATION [LARGE SCALE ANALYSIS]</scope>
</reference>
<evidence type="ECO:0000250" key="1"/>
<evidence type="ECO:0000250" key="2">
    <source>
        <dbReference type="UniProtKB" id="P41057"/>
    </source>
</evidence>
<evidence type="ECO:0000269" key="3">
    <source>
    </source>
</evidence>
<evidence type="ECO:0000305" key="4"/>
<keyword id="KW-0002">3D-structure</keyword>
<keyword id="KW-0963">Cytoplasm</keyword>
<keyword id="KW-0539">Nucleus</keyword>
<keyword id="KW-1185">Reference proteome</keyword>
<keyword id="KW-0687">Ribonucleoprotein</keyword>
<keyword id="KW-0689">Ribosomal protein</keyword>
<accession>O74329</accession>
<feature type="initiator methionine" description="Removed" evidence="1">
    <location>
        <position position="1"/>
    </location>
</feature>
<feature type="chain" id="PRO_0000131031" description="Small ribosomal subunit protein uS14">
    <location>
        <begin position="2"/>
        <end position="56"/>
    </location>
</feature>
<dbReference type="EMBL" id="CU329671">
    <property type="protein sequence ID" value="CAA20057.1"/>
    <property type="molecule type" value="Genomic_DNA"/>
</dbReference>
<dbReference type="PIR" id="T39525">
    <property type="entry name" value="T39525"/>
</dbReference>
<dbReference type="RefSeq" id="NP_595213.1">
    <property type="nucleotide sequence ID" value="NM_001021120.2"/>
</dbReference>
<dbReference type="PDB" id="9AXT">
    <property type="method" value="EM"/>
    <property type="resolution" value="2.40 A"/>
    <property type="chains" value="Aj=1-56"/>
</dbReference>
<dbReference type="PDB" id="9AXV">
    <property type="method" value="EM"/>
    <property type="resolution" value="2.40 A"/>
    <property type="chains" value="Aj=1-56"/>
</dbReference>
<dbReference type="PDBsum" id="9AXT"/>
<dbReference type="PDBsum" id="9AXV"/>
<dbReference type="EMDB" id="EMD-43972"/>
<dbReference type="EMDB" id="EMD-43976"/>
<dbReference type="SMR" id="O74329"/>
<dbReference type="BioGRID" id="276198">
    <property type="interactions" value="4"/>
</dbReference>
<dbReference type="FunCoup" id="O74329">
    <property type="interactions" value="365"/>
</dbReference>
<dbReference type="IntAct" id="O74329">
    <property type="interactions" value="1"/>
</dbReference>
<dbReference type="STRING" id="284812.O74329"/>
<dbReference type="iPTMnet" id="O74329"/>
<dbReference type="PaxDb" id="4896-SPBC1685.09.1"/>
<dbReference type="EnsemblFungi" id="SPBC1685.09.1">
    <property type="protein sequence ID" value="SPBC1685.09.1:pep"/>
    <property type="gene ID" value="SPBC1685.09"/>
</dbReference>
<dbReference type="GeneID" id="2539643"/>
<dbReference type="KEGG" id="spo:2539643"/>
<dbReference type="PomBase" id="SPBC1685.09">
    <property type="gene designation" value="rps29"/>
</dbReference>
<dbReference type="VEuPathDB" id="FungiDB:SPBC1685.09"/>
<dbReference type="eggNOG" id="KOG3506">
    <property type="taxonomic scope" value="Eukaryota"/>
</dbReference>
<dbReference type="HOGENOM" id="CLU_177289_1_1_1"/>
<dbReference type="InParanoid" id="O74329"/>
<dbReference type="OMA" id="NDVWNSH"/>
<dbReference type="PhylomeDB" id="O74329"/>
<dbReference type="Reactome" id="R-SPO-156827">
    <property type="pathway name" value="L13a-mediated translational silencing of Ceruloplasmin expression"/>
</dbReference>
<dbReference type="Reactome" id="R-SPO-1799339">
    <property type="pathway name" value="SRP-dependent cotranslational protein targeting to membrane"/>
</dbReference>
<dbReference type="Reactome" id="R-SPO-72649">
    <property type="pathway name" value="Translation initiation complex formation"/>
</dbReference>
<dbReference type="Reactome" id="R-SPO-72689">
    <property type="pathway name" value="Formation of a pool of free 40S subunits"/>
</dbReference>
<dbReference type="Reactome" id="R-SPO-72695">
    <property type="pathway name" value="Formation of the ternary complex, and subsequently, the 43S complex"/>
</dbReference>
<dbReference type="Reactome" id="R-SPO-72702">
    <property type="pathway name" value="Ribosomal scanning and start codon recognition"/>
</dbReference>
<dbReference type="Reactome" id="R-SPO-72706">
    <property type="pathway name" value="GTP hydrolysis and joining of the 60S ribosomal subunit"/>
</dbReference>
<dbReference type="Reactome" id="R-SPO-975956">
    <property type="pathway name" value="Nonsense Mediated Decay (NMD) independent of the Exon Junction Complex (EJC)"/>
</dbReference>
<dbReference type="Reactome" id="R-SPO-975957">
    <property type="pathway name" value="Nonsense Mediated Decay (NMD) enhanced by the Exon Junction Complex (EJC)"/>
</dbReference>
<dbReference type="PRO" id="PR:O74329"/>
<dbReference type="Proteomes" id="UP000002485">
    <property type="component" value="Chromosome II"/>
</dbReference>
<dbReference type="GO" id="GO:0005829">
    <property type="term" value="C:cytosol"/>
    <property type="evidence" value="ECO:0007005"/>
    <property type="project" value="PomBase"/>
</dbReference>
<dbReference type="GO" id="GO:0022627">
    <property type="term" value="C:cytosolic small ribosomal subunit"/>
    <property type="evidence" value="ECO:0000269"/>
    <property type="project" value="PomBase"/>
</dbReference>
<dbReference type="GO" id="GO:0005634">
    <property type="term" value="C:nucleus"/>
    <property type="evidence" value="ECO:0007005"/>
    <property type="project" value="PomBase"/>
</dbReference>
<dbReference type="GO" id="GO:0003735">
    <property type="term" value="F:structural constituent of ribosome"/>
    <property type="evidence" value="ECO:0000318"/>
    <property type="project" value="GO_Central"/>
</dbReference>
<dbReference type="GO" id="GO:0008270">
    <property type="term" value="F:zinc ion binding"/>
    <property type="evidence" value="ECO:0000318"/>
    <property type="project" value="GO_Central"/>
</dbReference>
<dbReference type="GO" id="GO:0002181">
    <property type="term" value="P:cytoplasmic translation"/>
    <property type="evidence" value="ECO:0000318"/>
    <property type="project" value="GO_Central"/>
</dbReference>
<dbReference type="FunFam" id="4.10.830.10:FF:000002">
    <property type="entry name" value="40S ribosomal protein S29"/>
    <property type="match status" value="1"/>
</dbReference>
<dbReference type="Gene3D" id="4.10.830.10">
    <property type="entry name" value="30s Ribosomal Protein S14, Chain N"/>
    <property type="match status" value="1"/>
</dbReference>
<dbReference type="InterPro" id="IPR001209">
    <property type="entry name" value="Ribosomal_uS14"/>
</dbReference>
<dbReference type="InterPro" id="IPR039744">
    <property type="entry name" value="RIbosomal_uS14_euk_arc"/>
</dbReference>
<dbReference type="InterPro" id="IPR043140">
    <property type="entry name" value="Ribosomal_uS14_sf"/>
</dbReference>
<dbReference type="NCBIfam" id="NF004424">
    <property type="entry name" value="PRK05766.1"/>
    <property type="match status" value="1"/>
</dbReference>
<dbReference type="PANTHER" id="PTHR12010">
    <property type="entry name" value="40S RIBOSOMAL PROTEIN S29"/>
    <property type="match status" value="1"/>
</dbReference>
<dbReference type="PANTHER" id="PTHR12010:SF2">
    <property type="entry name" value="40S RIBOSOMAL PROTEIN S29"/>
    <property type="match status" value="1"/>
</dbReference>
<dbReference type="Pfam" id="PF00253">
    <property type="entry name" value="Ribosomal_S14"/>
    <property type="match status" value="1"/>
</dbReference>
<comment type="function">
    <text evidence="2">Component of the ribosome, a large ribonucleoprotein complex responsible for the synthesis of proteins in the cell. The small ribosomal subunit (SSU) binds messenger RNAs (mRNAs) and translates the encoded message by selecting cognate aminoacyl-transfer RNA (tRNA) molecules. The large subunit (LSU) contains the ribosomal catalytic site termed the peptidyl transferase center (PTC), which catalyzes the formation of peptide bonds, thereby polymerizing the amino acids delivered by tRNAs into a polypeptide chain. The nascent polypeptides leave the ribosome through a tunnel in the LSU and interact with protein factors that function in enzymatic processing, targeting, and the membrane insertion of nascent chains at the exit of the ribosomal tunnel.</text>
</comment>
<comment type="subunit">
    <text evidence="2">Component of the small ribosomal subunit (SSU). Mature yeast ribosomes consist of a small (40S) and a large (60S) subunit. The 40S small subunit contains 1 molecule of ribosomal RNA (18S rRNA) and at least 33 different proteins. The large 60S subunit contains 3 rRNA molecules (25S, 5.8S and 5S rRNA) and at least 46 different proteins.</text>
</comment>
<comment type="subcellular location">
    <subcellularLocation>
        <location evidence="3">Cytoplasm</location>
    </subcellularLocation>
    <subcellularLocation>
        <location evidence="3">Nucleus</location>
    </subcellularLocation>
</comment>
<comment type="similarity">
    <text evidence="4">Belongs to the universal ribosomal protein uS14 family.</text>
</comment>
<gene>
    <name type="primary">rps29</name>
    <name type="ORF">SPBC1685.09</name>
</gene>
<name>RS29_SCHPO</name>
<proteinExistence type="evidence at protein level"/>
<organism>
    <name type="scientific">Schizosaccharomyces pombe (strain 972 / ATCC 24843)</name>
    <name type="common">Fission yeast</name>
    <dbReference type="NCBI Taxonomy" id="284812"/>
    <lineage>
        <taxon>Eukaryota</taxon>
        <taxon>Fungi</taxon>
        <taxon>Dikarya</taxon>
        <taxon>Ascomycota</taxon>
        <taxon>Taphrinomycotina</taxon>
        <taxon>Schizosaccharomycetes</taxon>
        <taxon>Schizosaccharomycetales</taxon>
        <taxon>Schizosaccharomycetaceae</taxon>
        <taxon>Schizosaccharomyces</taxon>
    </lineage>
</organism>